<protein>
    <recommendedName>
        <fullName>Protein FAM223B</fullName>
    </recommendedName>
</protein>
<accession>A6NKX1</accession>
<gene>
    <name type="primary">FAM223B</name>
    <name type="synonym">CXorf52B</name>
    <name type="synonym">LINC00204B</name>
</gene>
<proteinExistence type="inferred from homology"/>
<name>F223B_HUMAN</name>
<dbReference type="EMBL" id="AF277315">
    <property type="status" value="NOT_ANNOTATED_CDS"/>
    <property type="molecule type" value="Genomic_DNA"/>
</dbReference>
<dbReference type="BioMuta" id="HGNC:34048"/>
<dbReference type="MassIVE" id="A6NKX1"/>
<dbReference type="AGR" id="HGNC:34048"/>
<dbReference type="GeneCards" id="FAM223B"/>
<dbReference type="HGNC" id="HGNC:34048">
    <property type="gene designation" value="FAM223B"/>
</dbReference>
<dbReference type="neXtProt" id="NX_A6NKX1"/>
<dbReference type="InParanoid" id="A6NKX1"/>
<dbReference type="PAN-GO" id="A6NKX1">
    <property type="GO annotations" value="0 GO annotations based on evolutionary models"/>
</dbReference>
<dbReference type="PhylomeDB" id="A6NKX1"/>
<dbReference type="Pharos" id="A6NKX1">
    <property type="development level" value="Tdark"/>
</dbReference>
<dbReference type="PRO" id="PR:A6NKX1"/>
<dbReference type="Proteomes" id="UP000005640">
    <property type="component" value="Unplaced"/>
</dbReference>
<dbReference type="RNAct" id="A6NKX1">
    <property type="molecule type" value="protein"/>
</dbReference>
<feature type="chain" id="PRO_0000342335" description="Protein FAM223B">
    <location>
        <begin position="1"/>
        <end position="122"/>
    </location>
</feature>
<keyword id="KW-1185">Reference proteome</keyword>
<sequence>MYVQEHRLWGLMDKPHSAPCLMSLSLSFLICNKGRNAIRVQQSTDERMDAMLLRQCPTQGTRKNHESNSSLHHVPNWIFHSTIIPPNKGSKRCLRKVDWLLPRAGGVGGKRGVTADGDRVSF</sequence>
<evidence type="ECO:0000305" key="1"/>
<reference key="1">
    <citation type="journal article" date="2005" name="Nature">
        <title>The DNA sequence of the human X chromosome.</title>
        <authorList>
            <person name="Ross M.T."/>
            <person name="Grafham D.V."/>
            <person name="Coffey A.J."/>
            <person name="Scherer S."/>
            <person name="McLay K."/>
            <person name="Muzny D."/>
            <person name="Platzer M."/>
            <person name="Howell G.R."/>
            <person name="Burrows C."/>
            <person name="Bird C.P."/>
            <person name="Frankish A."/>
            <person name="Lovell F.L."/>
            <person name="Howe K.L."/>
            <person name="Ashurst J.L."/>
            <person name="Fulton R.S."/>
            <person name="Sudbrak R."/>
            <person name="Wen G."/>
            <person name="Jones M.C."/>
            <person name="Hurles M.E."/>
            <person name="Andrews T.D."/>
            <person name="Scott C.E."/>
            <person name="Searle S."/>
            <person name="Ramser J."/>
            <person name="Whittaker A."/>
            <person name="Deadman R."/>
            <person name="Carter N.P."/>
            <person name="Hunt S.E."/>
            <person name="Chen R."/>
            <person name="Cree A."/>
            <person name="Gunaratne P."/>
            <person name="Havlak P."/>
            <person name="Hodgson A."/>
            <person name="Metzker M.L."/>
            <person name="Richards S."/>
            <person name="Scott G."/>
            <person name="Steffen D."/>
            <person name="Sodergren E."/>
            <person name="Wheeler D.A."/>
            <person name="Worley K.C."/>
            <person name="Ainscough R."/>
            <person name="Ambrose K.D."/>
            <person name="Ansari-Lari M.A."/>
            <person name="Aradhya S."/>
            <person name="Ashwell R.I."/>
            <person name="Babbage A.K."/>
            <person name="Bagguley C.L."/>
            <person name="Ballabio A."/>
            <person name="Banerjee R."/>
            <person name="Barker G.E."/>
            <person name="Barlow K.F."/>
            <person name="Barrett I.P."/>
            <person name="Bates K.N."/>
            <person name="Beare D.M."/>
            <person name="Beasley H."/>
            <person name="Beasley O."/>
            <person name="Beck A."/>
            <person name="Bethel G."/>
            <person name="Blechschmidt K."/>
            <person name="Brady N."/>
            <person name="Bray-Allen S."/>
            <person name="Bridgeman A.M."/>
            <person name="Brown A.J."/>
            <person name="Brown M.J."/>
            <person name="Bonnin D."/>
            <person name="Bruford E.A."/>
            <person name="Buhay C."/>
            <person name="Burch P."/>
            <person name="Burford D."/>
            <person name="Burgess J."/>
            <person name="Burrill W."/>
            <person name="Burton J."/>
            <person name="Bye J.M."/>
            <person name="Carder C."/>
            <person name="Carrel L."/>
            <person name="Chako J."/>
            <person name="Chapman J.C."/>
            <person name="Chavez D."/>
            <person name="Chen E."/>
            <person name="Chen G."/>
            <person name="Chen Y."/>
            <person name="Chen Z."/>
            <person name="Chinault C."/>
            <person name="Ciccodicola A."/>
            <person name="Clark S.Y."/>
            <person name="Clarke G."/>
            <person name="Clee C.M."/>
            <person name="Clegg S."/>
            <person name="Clerc-Blankenburg K."/>
            <person name="Clifford K."/>
            <person name="Cobley V."/>
            <person name="Cole C.G."/>
            <person name="Conquer J.S."/>
            <person name="Corby N."/>
            <person name="Connor R.E."/>
            <person name="David R."/>
            <person name="Davies J."/>
            <person name="Davis C."/>
            <person name="Davis J."/>
            <person name="Delgado O."/>
            <person name="Deshazo D."/>
            <person name="Dhami P."/>
            <person name="Ding Y."/>
            <person name="Dinh H."/>
            <person name="Dodsworth S."/>
            <person name="Draper H."/>
            <person name="Dugan-Rocha S."/>
            <person name="Dunham A."/>
            <person name="Dunn M."/>
            <person name="Durbin K.J."/>
            <person name="Dutta I."/>
            <person name="Eades T."/>
            <person name="Ellwood M."/>
            <person name="Emery-Cohen A."/>
            <person name="Errington H."/>
            <person name="Evans K.L."/>
            <person name="Faulkner L."/>
            <person name="Francis F."/>
            <person name="Frankland J."/>
            <person name="Fraser A.E."/>
            <person name="Galgoczy P."/>
            <person name="Gilbert J."/>
            <person name="Gill R."/>
            <person name="Gloeckner G."/>
            <person name="Gregory S.G."/>
            <person name="Gribble S."/>
            <person name="Griffiths C."/>
            <person name="Grocock R."/>
            <person name="Gu Y."/>
            <person name="Gwilliam R."/>
            <person name="Hamilton C."/>
            <person name="Hart E.A."/>
            <person name="Hawes A."/>
            <person name="Heath P.D."/>
            <person name="Heitmann K."/>
            <person name="Hennig S."/>
            <person name="Hernandez J."/>
            <person name="Hinzmann B."/>
            <person name="Ho S."/>
            <person name="Hoffs M."/>
            <person name="Howden P.J."/>
            <person name="Huckle E.J."/>
            <person name="Hume J."/>
            <person name="Hunt P.J."/>
            <person name="Hunt A.R."/>
            <person name="Isherwood J."/>
            <person name="Jacob L."/>
            <person name="Johnson D."/>
            <person name="Jones S."/>
            <person name="de Jong P.J."/>
            <person name="Joseph S.S."/>
            <person name="Keenan S."/>
            <person name="Kelly S."/>
            <person name="Kershaw J.K."/>
            <person name="Khan Z."/>
            <person name="Kioschis P."/>
            <person name="Klages S."/>
            <person name="Knights A.J."/>
            <person name="Kosiura A."/>
            <person name="Kovar-Smith C."/>
            <person name="Laird G.K."/>
            <person name="Langford C."/>
            <person name="Lawlor S."/>
            <person name="Leversha M."/>
            <person name="Lewis L."/>
            <person name="Liu W."/>
            <person name="Lloyd C."/>
            <person name="Lloyd D.M."/>
            <person name="Loulseged H."/>
            <person name="Loveland J.E."/>
            <person name="Lovell J.D."/>
            <person name="Lozado R."/>
            <person name="Lu J."/>
            <person name="Lyne R."/>
            <person name="Ma J."/>
            <person name="Maheshwari M."/>
            <person name="Matthews L.H."/>
            <person name="McDowall J."/>
            <person name="McLaren S."/>
            <person name="McMurray A."/>
            <person name="Meidl P."/>
            <person name="Meitinger T."/>
            <person name="Milne S."/>
            <person name="Miner G."/>
            <person name="Mistry S.L."/>
            <person name="Morgan M."/>
            <person name="Morris S."/>
            <person name="Mueller I."/>
            <person name="Mullikin J.C."/>
            <person name="Nguyen N."/>
            <person name="Nordsiek G."/>
            <person name="Nyakatura G."/>
            <person name="O'dell C.N."/>
            <person name="Okwuonu G."/>
            <person name="Palmer S."/>
            <person name="Pandian R."/>
            <person name="Parker D."/>
            <person name="Parrish J."/>
            <person name="Pasternak S."/>
            <person name="Patel D."/>
            <person name="Pearce A.V."/>
            <person name="Pearson D.M."/>
            <person name="Pelan S.E."/>
            <person name="Perez L."/>
            <person name="Porter K.M."/>
            <person name="Ramsey Y."/>
            <person name="Reichwald K."/>
            <person name="Rhodes S."/>
            <person name="Ridler K.A."/>
            <person name="Schlessinger D."/>
            <person name="Schueler M.G."/>
            <person name="Sehra H.K."/>
            <person name="Shaw-Smith C."/>
            <person name="Shen H."/>
            <person name="Sheridan E.M."/>
            <person name="Shownkeen R."/>
            <person name="Skuce C.D."/>
            <person name="Smith M.L."/>
            <person name="Sotheran E.C."/>
            <person name="Steingruber H.E."/>
            <person name="Steward C.A."/>
            <person name="Storey R."/>
            <person name="Swann R.M."/>
            <person name="Swarbreck D."/>
            <person name="Tabor P.E."/>
            <person name="Taudien S."/>
            <person name="Taylor T."/>
            <person name="Teague B."/>
            <person name="Thomas K."/>
            <person name="Thorpe A."/>
            <person name="Timms K."/>
            <person name="Tracey A."/>
            <person name="Trevanion S."/>
            <person name="Tromans A.C."/>
            <person name="d'Urso M."/>
            <person name="Verduzco D."/>
            <person name="Villasana D."/>
            <person name="Waldron L."/>
            <person name="Wall M."/>
            <person name="Wang Q."/>
            <person name="Warren J."/>
            <person name="Warry G.L."/>
            <person name="Wei X."/>
            <person name="West A."/>
            <person name="Whitehead S.L."/>
            <person name="Whiteley M.N."/>
            <person name="Wilkinson J.E."/>
            <person name="Willey D.L."/>
            <person name="Williams G."/>
            <person name="Williams L."/>
            <person name="Williamson A."/>
            <person name="Williamson H."/>
            <person name="Wilming L."/>
            <person name="Woodmansey R.L."/>
            <person name="Wray P.W."/>
            <person name="Yen J."/>
            <person name="Zhang J."/>
            <person name="Zhou J."/>
            <person name="Zoghbi H."/>
            <person name="Zorilla S."/>
            <person name="Buck D."/>
            <person name="Reinhardt R."/>
            <person name="Poustka A."/>
            <person name="Rosenthal A."/>
            <person name="Lehrach H."/>
            <person name="Meindl A."/>
            <person name="Minx P.J."/>
            <person name="Hillier L.W."/>
            <person name="Willard H.F."/>
            <person name="Wilson R.K."/>
            <person name="Waterston R.H."/>
            <person name="Rice C.M."/>
            <person name="Vaudin M."/>
            <person name="Coulson A."/>
            <person name="Nelson D.L."/>
            <person name="Weinstock G."/>
            <person name="Sulston J.E."/>
            <person name="Durbin R.M."/>
            <person name="Hubbard T."/>
            <person name="Gibbs R.A."/>
            <person name="Beck S."/>
            <person name="Rogers J."/>
            <person name="Bentley D.R."/>
        </authorList>
    </citation>
    <scope>NUCLEOTIDE SEQUENCE [LARGE SCALE GENOMIC DNA]</scope>
</reference>
<organism>
    <name type="scientific">Homo sapiens</name>
    <name type="common">Human</name>
    <dbReference type="NCBI Taxonomy" id="9606"/>
    <lineage>
        <taxon>Eukaryota</taxon>
        <taxon>Metazoa</taxon>
        <taxon>Chordata</taxon>
        <taxon>Craniata</taxon>
        <taxon>Vertebrata</taxon>
        <taxon>Euteleostomi</taxon>
        <taxon>Mammalia</taxon>
        <taxon>Eutheria</taxon>
        <taxon>Euarchontoglires</taxon>
        <taxon>Primates</taxon>
        <taxon>Haplorrhini</taxon>
        <taxon>Catarrhini</taxon>
        <taxon>Hominidae</taxon>
        <taxon>Homo</taxon>
    </lineage>
</organism>
<comment type="similarity">
    <text evidence="1">Belongs to the FAM223 family.</text>
</comment>